<keyword id="KW-0963">Cytoplasm</keyword>
<keyword id="KW-0378">Hydrolase</keyword>
<keyword id="KW-0694">RNA-binding</keyword>
<keyword id="KW-0820">tRNA-binding</keyword>
<evidence type="ECO:0000255" key="1">
    <source>
        <dbReference type="HAMAP-Rule" id="MF_00518"/>
    </source>
</evidence>
<comment type="function">
    <text evidence="1">An aminoacyl-tRNA editing enzyme that deacylates mischarged D-aminoacyl-tRNAs. Also deacylates mischarged glycyl-tRNA(Ala), protecting cells against glycine mischarging by AlaRS. Acts via tRNA-based rather than protein-based catalysis; rejects L-amino acids rather than detecting D-amino acids in the active site. By recycling D-aminoacyl-tRNA to D-amino acids and free tRNA molecules, this enzyme counteracts the toxicity associated with the formation of D-aminoacyl-tRNA entities in vivo and helps enforce protein L-homochirality.</text>
</comment>
<comment type="catalytic activity">
    <reaction evidence="1">
        <text>glycyl-tRNA(Ala) + H2O = tRNA(Ala) + glycine + H(+)</text>
        <dbReference type="Rhea" id="RHEA:53744"/>
        <dbReference type="Rhea" id="RHEA-COMP:9657"/>
        <dbReference type="Rhea" id="RHEA-COMP:13640"/>
        <dbReference type="ChEBI" id="CHEBI:15377"/>
        <dbReference type="ChEBI" id="CHEBI:15378"/>
        <dbReference type="ChEBI" id="CHEBI:57305"/>
        <dbReference type="ChEBI" id="CHEBI:78442"/>
        <dbReference type="ChEBI" id="CHEBI:78522"/>
        <dbReference type="EC" id="3.1.1.96"/>
    </reaction>
</comment>
<comment type="catalytic activity">
    <reaction evidence="1">
        <text>a D-aminoacyl-tRNA + H2O = a tRNA + a D-alpha-amino acid + H(+)</text>
        <dbReference type="Rhea" id="RHEA:13953"/>
        <dbReference type="Rhea" id="RHEA-COMP:10123"/>
        <dbReference type="Rhea" id="RHEA-COMP:10124"/>
        <dbReference type="ChEBI" id="CHEBI:15377"/>
        <dbReference type="ChEBI" id="CHEBI:15378"/>
        <dbReference type="ChEBI" id="CHEBI:59871"/>
        <dbReference type="ChEBI" id="CHEBI:78442"/>
        <dbReference type="ChEBI" id="CHEBI:79333"/>
        <dbReference type="EC" id="3.1.1.96"/>
    </reaction>
</comment>
<comment type="subunit">
    <text evidence="1">Homodimer.</text>
</comment>
<comment type="subcellular location">
    <subcellularLocation>
        <location evidence="1">Cytoplasm</location>
    </subcellularLocation>
</comment>
<comment type="domain">
    <text evidence="1">A Gly-cisPro motif from one monomer fits into the active site of the other monomer to allow specific chiral rejection of L-amino acids.</text>
</comment>
<comment type="similarity">
    <text evidence="1">Belongs to the DTD family.</text>
</comment>
<proteinExistence type="inferred from homology"/>
<organism>
    <name type="scientific">Mycobacterium avium (strain 104)</name>
    <dbReference type="NCBI Taxonomy" id="243243"/>
    <lineage>
        <taxon>Bacteria</taxon>
        <taxon>Bacillati</taxon>
        <taxon>Actinomycetota</taxon>
        <taxon>Actinomycetes</taxon>
        <taxon>Mycobacteriales</taxon>
        <taxon>Mycobacteriaceae</taxon>
        <taxon>Mycobacterium</taxon>
        <taxon>Mycobacterium avium complex (MAC)</taxon>
    </lineage>
</organism>
<reference key="1">
    <citation type="submission" date="2006-10" db="EMBL/GenBank/DDBJ databases">
        <authorList>
            <person name="Fleischmann R.D."/>
            <person name="Dodson R.J."/>
            <person name="Haft D.H."/>
            <person name="Merkel J.S."/>
            <person name="Nelson W.C."/>
            <person name="Fraser C.M."/>
        </authorList>
    </citation>
    <scope>NUCLEOTIDE SEQUENCE [LARGE SCALE GENOMIC DNA]</scope>
    <source>
        <strain>104</strain>
    </source>
</reference>
<dbReference type="EC" id="3.1.1.96" evidence="1"/>
<dbReference type="EMBL" id="CP000479">
    <property type="protein sequence ID" value="ABK66403.1"/>
    <property type="molecule type" value="Genomic_DNA"/>
</dbReference>
<dbReference type="RefSeq" id="WP_011725056.1">
    <property type="nucleotide sequence ID" value="NC_008595.1"/>
</dbReference>
<dbReference type="SMR" id="A0QGF1"/>
<dbReference type="KEGG" id="mav:MAV_2802"/>
<dbReference type="HOGENOM" id="CLU_076901_1_2_11"/>
<dbReference type="Proteomes" id="UP000001574">
    <property type="component" value="Chromosome"/>
</dbReference>
<dbReference type="GO" id="GO:0005737">
    <property type="term" value="C:cytoplasm"/>
    <property type="evidence" value="ECO:0007669"/>
    <property type="project" value="UniProtKB-SubCell"/>
</dbReference>
<dbReference type="GO" id="GO:0051500">
    <property type="term" value="F:D-tyrosyl-tRNA(Tyr) deacylase activity"/>
    <property type="evidence" value="ECO:0007669"/>
    <property type="project" value="TreeGrafter"/>
</dbReference>
<dbReference type="GO" id="GO:0106026">
    <property type="term" value="F:Gly-tRNA(Ala) deacylase activity"/>
    <property type="evidence" value="ECO:0007669"/>
    <property type="project" value="UniProtKB-UniRule"/>
</dbReference>
<dbReference type="GO" id="GO:0043908">
    <property type="term" value="F:Ser(Gly)-tRNA(Ala) hydrolase activity"/>
    <property type="evidence" value="ECO:0007669"/>
    <property type="project" value="UniProtKB-UniRule"/>
</dbReference>
<dbReference type="GO" id="GO:0000049">
    <property type="term" value="F:tRNA binding"/>
    <property type="evidence" value="ECO:0007669"/>
    <property type="project" value="UniProtKB-UniRule"/>
</dbReference>
<dbReference type="GO" id="GO:0019478">
    <property type="term" value="P:D-amino acid catabolic process"/>
    <property type="evidence" value="ECO:0007669"/>
    <property type="project" value="UniProtKB-UniRule"/>
</dbReference>
<dbReference type="FunFam" id="3.50.80.10:FF:000002">
    <property type="entry name" value="D-aminoacyl-tRNA deacylase"/>
    <property type="match status" value="1"/>
</dbReference>
<dbReference type="Gene3D" id="3.50.80.10">
    <property type="entry name" value="D-tyrosyl-tRNA(Tyr) deacylase"/>
    <property type="match status" value="1"/>
</dbReference>
<dbReference type="HAMAP" id="MF_00518">
    <property type="entry name" value="Deacylase_Dtd"/>
    <property type="match status" value="1"/>
</dbReference>
<dbReference type="InterPro" id="IPR003732">
    <property type="entry name" value="Daa-tRNA_deacyls_DTD"/>
</dbReference>
<dbReference type="InterPro" id="IPR023509">
    <property type="entry name" value="DTD-like_sf"/>
</dbReference>
<dbReference type="NCBIfam" id="TIGR00256">
    <property type="entry name" value="D-aminoacyl-tRNA deacylase"/>
    <property type="match status" value="1"/>
</dbReference>
<dbReference type="PANTHER" id="PTHR10472:SF5">
    <property type="entry name" value="D-AMINOACYL-TRNA DEACYLASE 1"/>
    <property type="match status" value="1"/>
</dbReference>
<dbReference type="PANTHER" id="PTHR10472">
    <property type="entry name" value="D-TYROSYL-TRNA TYR DEACYLASE"/>
    <property type="match status" value="1"/>
</dbReference>
<dbReference type="Pfam" id="PF02580">
    <property type="entry name" value="Tyr_Deacylase"/>
    <property type="match status" value="1"/>
</dbReference>
<dbReference type="SUPFAM" id="SSF69500">
    <property type="entry name" value="DTD-like"/>
    <property type="match status" value="1"/>
</dbReference>
<feature type="chain" id="PRO_1000050854" description="D-aminoacyl-tRNA deacylase">
    <location>
        <begin position="1"/>
        <end position="143"/>
    </location>
</feature>
<feature type="short sequence motif" description="Gly-cisPro motif, important for rejection of L-amino acids" evidence="1">
    <location>
        <begin position="135"/>
        <end position="136"/>
    </location>
</feature>
<gene>
    <name evidence="1" type="primary">dtd</name>
    <name type="ordered locus">MAV_2802</name>
</gene>
<accession>A0QGF1</accession>
<protein>
    <recommendedName>
        <fullName evidence="1">D-aminoacyl-tRNA deacylase</fullName>
        <shortName evidence="1">DTD</shortName>
        <ecNumber evidence="1">3.1.1.96</ecNumber>
    </recommendedName>
    <alternativeName>
        <fullName evidence="1">Gly-tRNA(Ala) deacylase</fullName>
    </alternativeName>
</protein>
<name>DTD_MYCA1</name>
<sequence>MRVLVQRVSSAAVTVEGAVVGAIRPDAQGLLAFVGVTHSDDRDKARRLAEKLWKLRILADERSASDVGAPILVVSQFTLYADTAKGRRPSWNAAAPAAVAEPLVTEFAAALQGLGADVQTGVFGANMQVELVNDGPVTVLLEL</sequence>